<dbReference type="EMBL" id="CP000800">
    <property type="protein sequence ID" value="ABV18648.1"/>
    <property type="molecule type" value="Genomic_DNA"/>
</dbReference>
<dbReference type="RefSeq" id="WP_000845394.1">
    <property type="nucleotide sequence ID" value="NC_009801.1"/>
</dbReference>
<dbReference type="SMR" id="A7ZHP7"/>
<dbReference type="GeneID" id="93777272"/>
<dbReference type="KEGG" id="ecw:EcE24377A_0160"/>
<dbReference type="HOGENOM" id="CLU_015263_7_0_6"/>
<dbReference type="Proteomes" id="UP000001122">
    <property type="component" value="Chromosome"/>
</dbReference>
<dbReference type="GO" id="GO:0005886">
    <property type="term" value="C:plasma membrane"/>
    <property type="evidence" value="ECO:0007669"/>
    <property type="project" value="UniProtKB-SubCell"/>
</dbReference>
<dbReference type="GO" id="GO:0015297">
    <property type="term" value="F:antiporter activity"/>
    <property type="evidence" value="ECO:0007669"/>
    <property type="project" value="UniProtKB-UniRule"/>
</dbReference>
<dbReference type="GO" id="GO:0005247">
    <property type="term" value="F:voltage-gated chloride channel activity"/>
    <property type="evidence" value="ECO:0007669"/>
    <property type="project" value="TreeGrafter"/>
</dbReference>
<dbReference type="CDD" id="cd01031">
    <property type="entry name" value="EriC"/>
    <property type="match status" value="1"/>
</dbReference>
<dbReference type="FunFam" id="1.10.3080.10:FF:000005">
    <property type="entry name" value="H(+)/Cl(-) exchange transporter ClcA"/>
    <property type="match status" value="1"/>
</dbReference>
<dbReference type="Gene3D" id="1.10.3080.10">
    <property type="entry name" value="Clc chloride channel"/>
    <property type="match status" value="1"/>
</dbReference>
<dbReference type="HAMAP" id="MF_01128">
    <property type="entry name" value="CLC_ClcA"/>
    <property type="match status" value="1"/>
</dbReference>
<dbReference type="InterPro" id="IPR023861">
    <property type="entry name" value="Cl-channel_ClcA"/>
</dbReference>
<dbReference type="InterPro" id="IPR014743">
    <property type="entry name" value="Cl-channel_core"/>
</dbReference>
<dbReference type="InterPro" id="IPR001807">
    <property type="entry name" value="ClC"/>
</dbReference>
<dbReference type="NCBIfam" id="NF003640">
    <property type="entry name" value="PRK05277.1"/>
    <property type="match status" value="1"/>
</dbReference>
<dbReference type="PANTHER" id="PTHR45711">
    <property type="entry name" value="CHLORIDE CHANNEL PROTEIN"/>
    <property type="match status" value="1"/>
</dbReference>
<dbReference type="PANTHER" id="PTHR45711:SF6">
    <property type="entry name" value="CHLORIDE CHANNEL PROTEIN"/>
    <property type="match status" value="1"/>
</dbReference>
<dbReference type="Pfam" id="PF00654">
    <property type="entry name" value="Voltage_CLC"/>
    <property type="match status" value="1"/>
</dbReference>
<dbReference type="PRINTS" id="PR00762">
    <property type="entry name" value="CLCHANNEL"/>
</dbReference>
<dbReference type="SUPFAM" id="SSF81340">
    <property type="entry name" value="Clc chloride channel"/>
    <property type="match status" value="1"/>
</dbReference>
<feature type="chain" id="PRO_1000065377" description="H(+)/Cl(-) exchange transporter ClcA">
    <location>
        <begin position="1"/>
        <end position="473"/>
    </location>
</feature>
<feature type="topological domain" description="Cytoplasmic" evidence="1">
    <location>
        <begin position="1"/>
        <end position="32"/>
    </location>
</feature>
<feature type="transmembrane region" description="Helical" evidence="1">
    <location>
        <begin position="33"/>
        <end position="69"/>
    </location>
</feature>
<feature type="topological domain" description="Periplasmic" evidence="1">
    <location>
        <begin position="70"/>
        <end position="76"/>
    </location>
</feature>
<feature type="transmembrane region" description="Helical" evidence="1">
    <location>
        <begin position="77"/>
        <end position="100"/>
    </location>
</feature>
<feature type="intramembrane region" description="Helical" evidence="1">
    <location>
        <begin position="109"/>
        <end position="116"/>
    </location>
</feature>
<feature type="topological domain" description="Cytoplasmic" evidence="1">
    <location>
        <begin position="117"/>
        <end position="123"/>
    </location>
</feature>
<feature type="transmembrane region" description="Helical" evidence="1">
    <location>
        <begin position="124"/>
        <end position="141"/>
    </location>
</feature>
<feature type="transmembrane region" description="Helical" evidence="1">
    <location>
        <begin position="148"/>
        <end position="166"/>
    </location>
</feature>
<feature type="topological domain" description="Cytoplasmic" evidence="1">
    <location>
        <begin position="167"/>
        <end position="176"/>
    </location>
</feature>
<feature type="intramembrane region" description="Helical" evidence="1">
    <location>
        <begin position="177"/>
        <end position="189"/>
    </location>
</feature>
<feature type="intramembrane region" description="Helical" evidence="1">
    <location>
        <begin position="193"/>
        <end position="201"/>
    </location>
</feature>
<feature type="topological domain" description="Cytoplasmic" evidence="1">
    <location>
        <begin position="202"/>
        <end position="214"/>
    </location>
</feature>
<feature type="transmembrane region" description="Helical" evidence="1">
    <location>
        <begin position="215"/>
        <end position="232"/>
    </location>
</feature>
<feature type="topological domain" description="Periplasmic" evidence="1">
    <location>
        <begin position="233"/>
        <end position="252"/>
    </location>
</feature>
<feature type="transmembrane region" description="Helical" evidence="1">
    <location>
        <begin position="253"/>
        <end position="281"/>
    </location>
</feature>
<feature type="topological domain" description="Cytoplasmic" evidence="1">
    <location>
        <begin position="282"/>
        <end position="287"/>
    </location>
</feature>
<feature type="transmembrane region" description="Helical" evidence="1">
    <location>
        <begin position="288"/>
        <end position="309"/>
    </location>
</feature>
<feature type="topological domain" description="Periplasmic" evidence="1">
    <location>
        <begin position="310"/>
        <end position="329"/>
    </location>
</feature>
<feature type="transmembrane region" description="Helical" evidence="1">
    <location>
        <begin position="330"/>
        <end position="349"/>
    </location>
</feature>
<feature type="transmembrane region" description="Helical" evidence="1">
    <location>
        <begin position="355"/>
        <end position="376"/>
    </location>
</feature>
<feature type="topological domain" description="Periplasmic" evidence="1">
    <location>
        <begin position="377"/>
        <end position="386"/>
    </location>
</feature>
<feature type="intramembrane region" description="Helical" evidence="1">
    <location>
        <begin position="387"/>
        <end position="401"/>
    </location>
</feature>
<feature type="intramembrane region" description="Note=Loop between two helices" evidence="1">
    <location>
        <begin position="402"/>
        <end position="404"/>
    </location>
</feature>
<feature type="intramembrane region" description="Helical" evidence="1">
    <location>
        <begin position="405"/>
        <end position="416"/>
    </location>
</feature>
<feature type="intramembrane region" description="Note=Loop between two helices" evidence="1">
    <location>
        <begin position="417"/>
        <end position="421"/>
    </location>
</feature>
<feature type="transmembrane region" description="Helical" evidence="1">
    <location>
        <begin position="422"/>
        <end position="438"/>
    </location>
</feature>
<feature type="topological domain" description="Cytoplasmic" evidence="1">
    <location>
        <begin position="439"/>
        <end position="473"/>
    </location>
</feature>
<feature type="short sequence motif" description="Selectivity filter part_1" evidence="1">
    <location>
        <begin position="106"/>
        <end position="110"/>
    </location>
</feature>
<feature type="short sequence motif" description="Selectivity filter part_2" evidence="1">
    <location>
        <begin position="146"/>
        <end position="150"/>
    </location>
</feature>
<feature type="short sequence motif" description="Selectivity filter part_3" evidence="1">
    <location>
        <begin position="355"/>
        <end position="359"/>
    </location>
</feature>
<feature type="binding site" evidence="1">
    <location>
        <position position="107"/>
    </location>
    <ligand>
        <name>chloride</name>
        <dbReference type="ChEBI" id="CHEBI:17996"/>
    </ligand>
</feature>
<feature type="binding site" evidence="1">
    <location>
        <position position="356"/>
    </location>
    <ligand>
        <name>chloride</name>
        <dbReference type="ChEBI" id="CHEBI:17996"/>
    </ligand>
</feature>
<feature type="binding site" evidence="1">
    <location>
        <position position="357"/>
    </location>
    <ligand>
        <name>chloride</name>
        <dbReference type="ChEBI" id="CHEBI:17996"/>
    </ligand>
</feature>
<feature type="binding site" evidence="1">
    <location>
        <position position="445"/>
    </location>
    <ligand>
        <name>chloride</name>
        <dbReference type="ChEBI" id="CHEBI:17996"/>
    </ligand>
</feature>
<feature type="site" description="Mediates proton transfer from the outer aqueous phase to the interior of the protein; involved in linking H(+) and Cl(-) transport" evidence="1">
    <location>
        <position position="148"/>
    </location>
</feature>
<feature type="site" description="Mediates proton transfer from the protein to the inner aqueous phase" evidence="1">
    <location>
        <position position="203"/>
    </location>
</feature>
<sequence length="473" mass="50349">MKTDTPSLETPQAARLRRRQLIRQLLERDKTPLAILFMAAVVGTLVGLAAVAFDKGVAWLQNQRMGALVHTADNYPLLLTVAFLCSAVLAMFGYFLVRKYAPEAGGSGIPEIEGALEDQRPVRWWRVLPVKFFGGLGTLGGGMVLGREGPTVQIGGNIGRMVLDIFRLKGDEARHTLLATGAAAGLAAAFNAPLAGILFIIEEMRPQFRYTLISIKAVFIGVIMSTIMYRIFNHEVALIDVGKLSDAPLNTLWLYLILGIIFGIFGPIFNKWVLGMQDLLHRVHGGNITKWVLMGGAIGGLCGLLGFVAPATSGGGFNLIPIATAGNFSMGMLVFIFVARVITTLLCFSSGAPGGIFAPMLALGTVLGTAFGMVAVELFPQYHLEAGTFAIAGMGALLAASIRAPLTGIILVLEMTDNYQLILPMIITGLGATLLAQFTGGKPLYSAILARTLAKQEAEQLARSKAASASENT</sequence>
<comment type="function">
    <text evidence="1">Proton-coupled chloride transporter. Functions as antiport system and exchanges two chloride ions for 1 proton. Probably acts as an electrical shunt for an outwardly-directed proton pump that is linked to amino acid decarboxylation, as part of the extreme acid resistance (XAR) response.</text>
</comment>
<comment type="catalytic activity">
    <reaction evidence="1">
        <text>2 chloride(in) + H(+)(out) = 2 chloride(out) + H(+)(in)</text>
        <dbReference type="Rhea" id="RHEA:29567"/>
        <dbReference type="ChEBI" id="CHEBI:15378"/>
        <dbReference type="ChEBI" id="CHEBI:17996"/>
    </reaction>
</comment>
<comment type="subunit">
    <text evidence="1">Homodimer.</text>
</comment>
<comment type="subcellular location">
    <subcellularLocation>
        <location evidence="1">Cell inner membrane</location>
        <topology evidence="1">Multi-pass membrane protein</topology>
    </subcellularLocation>
</comment>
<comment type="similarity">
    <text evidence="1">Belongs to the chloride channel (TC 2.A.49) family. ClcA subfamily.</text>
</comment>
<evidence type="ECO:0000255" key="1">
    <source>
        <dbReference type="HAMAP-Rule" id="MF_01128"/>
    </source>
</evidence>
<organism>
    <name type="scientific">Escherichia coli O139:H28 (strain E24377A / ETEC)</name>
    <dbReference type="NCBI Taxonomy" id="331111"/>
    <lineage>
        <taxon>Bacteria</taxon>
        <taxon>Pseudomonadati</taxon>
        <taxon>Pseudomonadota</taxon>
        <taxon>Gammaproteobacteria</taxon>
        <taxon>Enterobacterales</taxon>
        <taxon>Enterobacteriaceae</taxon>
        <taxon>Escherichia</taxon>
    </lineage>
</organism>
<gene>
    <name evidence="1" type="primary">clcA</name>
    <name evidence="1" type="synonym">eriC</name>
    <name type="ordered locus">EcE24377A_0160</name>
</gene>
<keyword id="KW-0050">Antiport</keyword>
<keyword id="KW-0997">Cell inner membrane</keyword>
<keyword id="KW-1003">Cell membrane</keyword>
<keyword id="KW-0868">Chloride</keyword>
<keyword id="KW-0406">Ion transport</keyword>
<keyword id="KW-0472">Membrane</keyword>
<keyword id="KW-1185">Reference proteome</keyword>
<keyword id="KW-0812">Transmembrane</keyword>
<keyword id="KW-1133">Transmembrane helix</keyword>
<keyword id="KW-0813">Transport</keyword>
<proteinExistence type="inferred from homology"/>
<accession>A7ZHP7</accession>
<reference key="1">
    <citation type="journal article" date="2008" name="J. Bacteriol.">
        <title>The pangenome structure of Escherichia coli: comparative genomic analysis of E. coli commensal and pathogenic isolates.</title>
        <authorList>
            <person name="Rasko D.A."/>
            <person name="Rosovitz M.J."/>
            <person name="Myers G.S.A."/>
            <person name="Mongodin E.F."/>
            <person name="Fricke W.F."/>
            <person name="Gajer P."/>
            <person name="Crabtree J."/>
            <person name="Sebaihia M."/>
            <person name="Thomson N.R."/>
            <person name="Chaudhuri R."/>
            <person name="Henderson I.R."/>
            <person name="Sperandio V."/>
            <person name="Ravel J."/>
        </authorList>
    </citation>
    <scope>NUCLEOTIDE SEQUENCE [LARGE SCALE GENOMIC DNA]</scope>
    <source>
        <strain>E24377A / ETEC</strain>
    </source>
</reference>
<name>CLCA_ECO24</name>
<protein>
    <recommendedName>
        <fullName evidence="1">H(+)/Cl(-) exchange transporter ClcA</fullName>
    </recommendedName>
</protein>